<feature type="chain" id="PRO_0000133266" description="Protein E4">
    <location>
        <begin position="1"/>
        <end position="88"/>
    </location>
</feature>
<proteinExistence type="inferred from homology"/>
<protein>
    <recommendedName>
        <fullName>Protein E4</fullName>
    </recommendedName>
</protein>
<accession>P06791</accession>
<gene>
    <name type="primary">E4</name>
</gene>
<sequence>MADPEVPVTTRYPLLSLLNSYSTPPHRIPAPCPWAPQRPTARRRLLHDLDTVDSRRSSIVDLSTHFSVQLHLQATTKDGNSVVVTLRL</sequence>
<organismHost>
    <name type="scientific">Homo sapiens</name>
    <name type="common">Human</name>
    <dbReference type="NCBI Taxonomy" id="9606"/>
</organismHost>
<comment type="function">
    <text evidence="1">Contributes to multiple aspects of the viral life cycle including viral genome amplification, suppression of suprabasal cell differentiation and egress of newly formed virions. Induces host cell cycle arrest at the G2 phase by associating with and preventing the nuclear entry of host CDK1/cyclin B1 complexes. Inhibits cellular DNA replication by preventing loading of host replication licensing proteins MCM2 and MCM7 onto chromatin. Within the cytoplasm, associates with host kinase SRPK1, a splicing factor regulator, and inhibits its activity. Therefore, E4 favors expression of late viral transcripts by inhibiting SRPK1-mediated phosphorylation of host serine-arginine (SR) proteins that have critical roles in mRNA metabolism. Late in the infectious cycle, E4 also acts to diminish the integrity of the keratinocyte by disrupting the keratin cytoskeleton and inducing apoptosis through alteration of mitochondrial function to facilitate egress of the newly formed virions.</text>
</comment>
<comment type="subunit">
    <text evidence="1">Assembles into oligomeric complexes. Interacts with host CDK1. Interacts with host SRPK1; this interaction may favor expression of late viral transcripts. Interacts with host cytokeratin components KRT8 and KRT18.</text>
</comment>
<comment type="subcellular location">
    <subcellularLocation>
        <location evidence="1">Host cytoplasm</location>
    </subcellularLocation>
    <subcellularLocation>
        <location evidence="1">Host nucleus</location>
    </subcellularLocation>
</comment>
<comment type="PTM">
    <text evidence="1">Phosphorylated by host ERK. The phosphorylation triggers a structural change that enhances keratin binding and protein stability.</text>
</comment>
<comment type="miscellaneous">
    <text evidence="1">The major E4 form is first synthesized as an E1^E4 fusion protein from spliced E1^E4 transcripts, such that the first few amino acids of the E4 protein are derived from the N terminus of E1.</text>
</comment>
<comment type="similarity">
    <text evidence="2">Belongs to the papillomaviridae E4 protein family.</text>
</comment>
<organism>
    <name type="scientific">Human papillomavirus type 18</name>
    <dbReference type="NCBI Taxonomy" id="333761"/>
    <lineage>
        <taxon>Viruses</taxon>
        <taxon>Monodnaviria</taxon>
        <taxon>Shotokuvirae</taxon>
        <taxon>Cossaviricota</taxon>
        <taxon>Papovaviricetes</taxon>
        <taxon>Zurhausenvirales</taxon>
        <taxon>Papillomaviridae</taxon>
        <taxon>Firstpapillomavirinae</taxon>
        <taxon>Alphapapillomavirus</taxon>
        <taxon>Alphapapillomavirus 7</taxon>
    </lineage>
</organism>
<evidence type="ECO:0000250" key="1">
    <source>
        <dbReference type="UniProtKB" id="P06922"/>
    </source>
</evidence>
<evidence type="ECO:0000305" key="2"/>
<keyword id="KW-0244">Early protein</keyword>
<keyword id="KW-1035">Host cytoplasm</keyword>
<keyword id="KW-1079">Host G2/M cell cycle arrest by virus</keyword>
<keyword id="KW-1048">Host nucleus</keyword>
<keyword id="KW-0945">Host-virus interaction</keyword>
<keyword id="KW-1121">Modulation of host cell cycle by virus</keyword>
<keyword id="KW-0597">Phosphoprotein</keyword>
<keyword id="KW-1185">Reference proteome</keyword>
<name>VE4_HPV18</name>
<dbReference type="EMBL" id="X05015">
    <property type="protein sequence ID" value="CAA28668.1"/>
    <property type="status" value="ALT_SEQ"/>
    <property type="molecule type" value="Genomic_DNA"/>
</dbReference>
<dbReference type="PIR" id="E26251">
    <property type="entry name" value="W4WL18"/>
</dbReference>
<dbReference type="KEGG" id="vg:1489086"/>
<dbReference type="Proteomes" id="UP000009109">
    <property type="component" value="Genome"/>
</dbReference>
<dbReference type="GO" id="GO:0030430">
    <property type="term" value="C:host cell cytoplasm"/>
    <property type="evidence" value="ECO:0007669"/>
    <property type="project" value="UniProtKB-SubCell"/>
</dbReference>
<dbReference type="GO" id="GO:0042025">
    <property type="term" value="C:host cell nucleus"/>
    <property type="evidence" value="ECO:0007669"/>
    <property type="project" value="UniProtKB-SubCell"/>
</dbReference>
<dbReference type="GO" id="GO:0039592">
    <property type="term" value="P:symbiont-mediated arrest of host cell cycle during G2/M transition"/>
    <property type="evidence" value="ECO:0007669"/>
    <property type="project" value="UniProtKB-KW"/>
</dbReference>
<dbReference type="InterPro" id="IPR003861">
    <property type="entry name" value="Papilloma_E4"/>
</dbReference>
<dbReference type="Pfam" id="PF02711">
    <property type="entry name" value="Pap_E4"/>
    <property type="match status" value="1"/>
</dbReference>
<reference key="1">
    <citation type="journal article" date="1987" name="J. Mol. Biol.">
        <title>Nucleotide sequence and comparative analysis of the human papillomavirus type 18 genome. Phylogeny of papillomaviruses and repeated structure of the E6 and E7 gene products.</title>
        <authorList>
            <person name="Cole S.T."/>
            <person name="Danos O."/>
        </authorList>
    </citation>
    <scope>NUCLEOTIDE SEQUENCE [GENOMIC DNA]</scope>
</reference>